<sequence>MKVSQFFLATVKETPADAVLASHQLMIRAGMLRKLASGLYTWLPLGLRVLQKVADVVREEMNRAGALELLMPIVQPASLWQESGRWEAYGAELLRIMDRHQNGFCFGPTHEEVITDIARQELKSYKQLPLNFYQIQTKFRDEIRPRFGVMRSREFLMKDAYSFDLDEKGMQAAYEKMFDAYRRIFTRLGLNFRAVLADTGAIGGDYSHEFQVLADVGEDTVVYSDESDYAANIEKAAAQAPQGERVKPVAEMKKIATPGVRTIKQLADKANILPEKGVKTLIVKGDESSLIALILRGDHELNDVKAQHLPGVAFPLQFADEKEIREAIGCGPGSLGPVNLPIPFIVDRDAAQLVDFSCGANEDDFHWINVNWERDVPLGSVADIRKVVEGDISPDGKGRLRFARGIEVGQVFQLGDKYSRKMNATVVDELGKSRYLQMGCYGIGVSRTVAAAIEQNHDERGIIWPMPMAPFFIALVPVNMHKSYRVREACEKLYNELIDAGYEVLWDDRKERPGVMFADMDLIGIPHRLVISESGLDRGIVEYKARKSKEAENVSLENVLSVFR</sequence>
<keyword id="KW-0030">Aminoacyl-tRNA synthetase</keyword>
<keyword id="KW-0067">ATP-binding</keyword>
<keyword id="KW-0963">Cytoplasm</keyword>
<keyword id="KW-0436">Ligase</keyword>
<keyword id="KW-0547">Nucleotide-binding</keyword>
<keyword id="KW-0648">Protein biosynthesis</keyword>
<reference key="1">
    <citation type="submission" date="2007-11" db="EMBL/GenBank/DDBJ databases">
        <title>Genome sequencing of phylogenetically and phenotypically diverse Coxiella burnetii isolates.</title>
        <authorList>
            <person name="Seshadri R."/>
            <person name="Samuel J.E."/>
        </authorList>
    </citation>
    <scope>NUCLEOTIDE SEQUENCE [LARGE SCALE GENOMIC DNA]</scope>
    <source>
        <strain>RSA 331 / Henzerling II</strain>
    </source>
</reference>
<organism>
    <name type="scientific">Coxiella burnetii (strain RSA 331 / Henzerling II)</name>
    <dbReference type="NCBI Taxonomy" id="360115"/>
    <lineage>
        <taxon>Bacteria</taxon>
        <taxon>Pseudomonadati</taxon>
        <taxon>Pseudomonadota</taxon>
        <taxon>Gammaproteobacteria</taxon>
        <taxon>Legionellales</taxon>
        <taxon>Coxiellaceae</taxon>
        <taxon>Coxiella</taxon>
    </lineage>
</organism>
<feature type="chain" id="PRO_1000087837" description="Proline--tRNA ligase">
    <location>
        <begin position="1"/>
        <end position="564"/>
    </location>
</feature>
<proteinExistence type="inferred from homology"/>
<protein>
    <recommendedName>
        <fullName evidence="1">Proline--tRNA ligase</fullName>
        <ecNumber evidence="1">6.1.1.15</ecNumber>
    </recommendedName>
    <alternativeName>
        <fullName evidence="1">Prolyl-tRNA synthetase</fullName>
        <shortName evidence="1">ProRS</shortName>
    </alternativeName>
</protein>
<name>SYP_COXBR</name>
<gene>
    <name evidence="1" type="primary">proS</name>
    <name type="ordered locus">COXBURSA331_A0168</name>
</gene>
<dbReference type="EC" id="6.1.1.15" evidence="1"/>
<dbReference type="EMBL" id="CP000890">
    <property type="protein sequence ID" value="ABX77389.1"/>
    <property type="molecule type" value="Genomic_DNA"/>
</dbReference>
<dbReference type="SMR" id="A9N9Z2"/>
<dbReference type="KEGG" id="cbs:COXBURSA331_A0168"/>
<dbReference type="HOGENOM" id="CLU_016739_0_0_6"/>
<dbReference type="GO" id="GO:0005829">
    <property type="term" value="C:cytosol"/>
    <property type="evidence" value="ECO:0007669"/>
    <property type="project" value="TreeGrafter"/>
</dbReference>
<dbReference type="GO" id="GO:0002161">
    <property type="term" value="F:aminoacyl-tRNA deacylase activity"/>
    <property type="evidence" value="ECO:0007669"/>
    <property type="project" value="InterPro"/>
</dbReference>
<dbReference type="GO" id="GO:0005524">
    <property type="term" value="F:ATP binding"/>
    <property type="evidence" value="ECO:0007669"/>
    <property type="project" value="UniProtKB-UniRule"/>
</dbReference>
<dbReference type="GO" id="GO:0004827">
    <property type="term" value="F:proline-tRNA ligase activity"/>
    <property type="evidence" value="ECO:0007669"/>
    <property type="project" value="UniProtKB-UniRule"/>
</dbReference>
<dbReference type="GO" id="GO:0006433">
    <property type="term" value="P:prolyl-tRNA aminoacylation"/>
    <property type="evidence" value="ECO:0007669"/>
    <property type="project" value="UniProtKB-UniRule"/>
</dbReference>
<dbReference type="CDD" id="cd04334">
    <property type="entry name" value="ProRS-INS"/>
    <property type="match status" value="1"/>
</dbReference>
<dbReference type="CDD" id="cd00861">
    <property type="entry name" value="ProRS_anticodon_short"/>
    <property type="match status" value="1"/>
</dbReference>
<dbReference type="CDD" id="cd00779">
    <property type="entry name" value="ProRS_core_prok"/>
    <property type="match status" value="1"/>
</dbReference>
<dbReference type="FunFam" id="3.30.930.10:FF:000043">
    <property type="entry name" value="Proline--tRNA ligase"/>
    <property type="match status" value="1"/>
</dbReference>
<dbReference type="FunFam" id="3.40.50.800:FF:000006">
    <property type="entry name" value="Proline--tRNA ligase"/>
    <property type="match status" value="1"/>
</dbReference>
<dbReference type="FunFam" id="3.90.960.10:FF:000001">
    <property type="entry name" value="Proline--tRNA ligase"/>
    <property type="match status" value="1"/>
</dbReference>
<dbReference type="Gene3D" id="3.40.50.800">
    <property type="entry name" value="Anticodon-binding domain"/>
    <property type="match status" value="1"/>
</dbReference>
<dbReference type="Gene3D" id="3.30.930.10">
    <property type="entry name" value="Bira Bifunctional Protein, Domain 2"/>
    <property type="match status" value="2"/>
</dbReference>
<dbReference type="Gene3D" id="3.90.960.10">
    <property type="entry name" value="YbaK/aminoacyl-tRNA synthetase-associated domain"/>
    <property type="match status" value="1"/>
</dbReference>
<dbReference type="HAMAP" id="MF_01569">
    <property type="entry name" value="Pro_tRNA_synth_type1"/>
    <property type="match status" value="1"/>
</dbReference>
<dbReference type="InterPro" id="IPR002314">
    <property type="entry name" value="aa-tRNA-synt_IIb"/>
</dbReference>
<dbReference type="InterPro" id="IPR006195">
    <property type="entry name" value="aa-tRNA-synth_II"/>
</dbReference>
<dbReference type="InterPro" id="IPR045864">
    <property type="entry name" value="aa-tRNA-synth_II/BPL/LPL"/>
</dbReference>
<dbReference type="InterPro" id="IPR004154">
    <property type="entry name" value="Anticodon-bd"/>
</dbReference>
<dbReference type="InterPro" id="IPR036621">
    <property type="entry name" value="Anticodon-bd_dom_sf"/>
</dbReference>
<dbReference type="InterPro" id="IPR002316">
    <property type="entry name" value="Pro-tRNA-ligase_IIa"/>
</dbReference>
<dbReference type="InterPro" id="IPR004500">
    <property type="entry name" value="Pro-tRNA-synth_IIa_bac-type"/>
</dbReference>
<dbReference type="InterPro" id="IPR023717">
    <property type="entry name" value="Pro-tRNA-Synthase_IIa_type1"/>
</dbReference>
<dbReference type="InterPro" id="IPR050062">
    <property type="entry name" value="Pro-tRNA_synthetase"/>
</dbReference>
<dbReference type="InterPro" id="IPR044140">
    <property type="entry name" value="ProRS_anticodon_short"/>
</dbReference>
<dbReference type="InterPro" id="IPR033730">
    <property type="entry name" value="ProRS_core_prok"/>
</dbReference>
<dbReference type="InterPro" id="IPR036754">
    <property type="entry name" value="YbaK/aa-tRNA-synt-asso_dom_sf"/>
</dbReference>
<dbReference type="InterPro" id="IPR007214">
    <property type="entry name" value="YbaK/aa-tRNA-synth-assoc-dom"/>
</dbReference>
<dbReference type="NCBIfam" id="NF006625">
    <property type="entry name" value="PRK09194.1"/>
    <property type="match status" value="1"/>
</dbReference>
<dbReference type="NCBIfam" id="TIGR00409">
    <property type="entry name" value="proS_fam_II"/>
    <property type="match status" value="1"/>
</dbReference>
<dbReference type="PANTHER" id="PTHR42753">
    <property type="entry name" value="MITOCHONDRIAL RIBOSOME PROTEIN L39/PROLYL-TRNA LIGASE FAMILY MEMBER"/>
    <property type="match status" value="1"/>
</dbReference>
<dbReference type="PANTHER" id="PTHR42753:SF2">
    <property type="entry name" value="PROLINE--TRNA LIGASE"/>
    <property type="match status" value="1"/>
</dbReference>
<dbReference type="Pfam" id="PF03129">
    <property type="entry name" value="HGTP_anticodon"/>
    <property type="match status" value="1"/>
</dbReference>
<dbReference type="Pfam" id="PF00587">
    <property type="entry name" value="tRNA-synt_2b"/>
    <property type="match status" value="1"/>
</dbReference>
<dbReference type="Pfam" id="PF04073">
    <property type="entry name" value="tRNA_edit"/>
    <property type="match status" value="1"/>
</dbReference>
<dbReference type="PIRSF" id="PIRSF001535">
    <property type="entry name" value="ProRS_1"/>
    <property type="match status" value="1"/>
</dbReference>
<dbReference type="PRINTS" id="PR01046">
    <property type="entry name" value="TRNASYNTHPRO"/>
</dbReference>
<dbReference type="SUPFAM" id="SSF52954">
    <property type="entry name" value="Class II aaRS ABD-related"/>
    <property type="match status" value="1"/>
</dbReference>
<dbReference type="SUPFAM" id="SSF55681">
    <property type="entry name" value="Class II aaRS and biotin synthetases"/>
    <property type="match status" value="1"/>
</dbReference>
<dbReference type="SUPFAM" id="SSF55826">
    <property type="entry name" value="YbaK/ProRS associated domain"/>
    <property type="match status" value="1"/>
</dbReference>
<dbReference type="PROSITE" id="PS50862">
    <property type="entry name" value="AA_TRNA_LIGASE_II"/>
    <property type="match status" value="1"/>
</dbReference>
<comment type="function">
    <text evidence="1">Catalyzes the attachment of proline to tRNA(Pro) in a two-step reaction: proline is first activated by ATP to form Pro-AMP and then transferred to the acceptor end of tRNA(Pro). As ProRS can inadvertently accommodate and process non-cognate amino acids such as alanine and cysteine, to avoid such errors it has two additional distinct editing activities against alanine. One activity is designated as 'pretransfer' editing and involves the tRNA(Pro)-independent hydrolysis of activated Ala-AMP. The other activity is designated 'posttransfer' editing and involves deacylation of mischarged Ala-tRNA(Pro). The misacylated Cys-tRNA(Pro) is not edited by ProRS.</text>
</comment>
<comment type="catalytic activity">
    <reaction evidence="1">
        <text>tRNA(Pro) + L-proline + ATP = L-prolyl-tRNA(Pro) + AMP + diphosphate</text>
        <dbReference type="Rhea" id="RHEA:14305"/>
        <dbReference type="Rhea" id="RHEA-COMP:9700"/>
        <dbReference type="Rhea" id="RHEA-COMP:9702"/>
        <dbReference type="ChEBI" id="CHEBI:30616"/>
        <dbReference type="ChEBI" id="CHEBI:33019"/>
        <dbReference type="ChEBI" id="CHEBI:60039"/>
        <dbReference type="ChEBI" id="CHEBI:78442"/>
        <dbReference type="ChEBI" id="CHEBI:78532"/>
        <dbReference type="ChEBI" id="CHEBI:456215"/>
        <dbReference type="EC" id="6.1.1.15"/>
    </reaction>
</comment>
<comment type="subunit">
    <text evidence="1">Homodimer.</text>
</comment>
<comment type="subcellular location">
    <subcellularLocation>
        <location evidence="1">Cytoplasm</location>
    </subcellularLocation>
</comment>
<comment type="domain">
    <text evidence="1">Consists of three domains: the N-terminal catalytic domain, the editing domain and the C-terminal anticodon-binding domain.</text>
</comment>
<comment type="similarity">
    <text evidence="1">Belongs to the class-II aminoacyl-tRNA synthetase family. ProS type 1 subfamily.</text>
</comment>
<accession>A9N9Z2</accession>
<evidence type="ECO:0000255" key="1">
    <source>
        <dbReference type="HAMAP-Rule" id="MF_01569"/>
    </source>
</evidence>